<feature type="signal peptide" evidence="2">
    <location>
        <begin position="1"/>
        <end position="15"/>
    </location>
</feature>
<feature type="chain" id="PRO_0000394565" description="Probable pectate lyase B">
    <location>
        <begin position="16"/>
        <end position="326"/>
    </location>
</feature>
<feature type="active site" evidence="2">
    <location>
        <position position="219"/>
    </location>
</feature>
<feature type="binding site" evidence="1">
    <location>
        <position position="133"/>
    </location>
    <ligand>
        <name>Ca(2+)</name>
        <dbReference type="ChEBI" id="CHEBI:29108"/>
    </ligand>
</feature>
<feature type="binding site" evidence="1">
    <location>
        <position position="162"/>
    </location>
    <ligand>
        <name>Ca(2+)</name>
        <dbReference type="ChEBI" id="CHEBI:29108"/>
    </ligand>
</feature>
<feature type="binding site" evidence="1">
    <location>
        <position position="166"/>
    </location>
    <ligand>
        <name>Ca(2+)</name>
        <dbReference type="ChEBI" id="CHEBI:29108"/>
    </ligand>
</feature>
<evidence type="ECO:0000250" key="1"/>
<evidence type="ECO:0000255" key="2"/>
<evidence type="ECO:0000305" key="3"/>
<sequence length="326" mass="34445">MRVTAILTLATIAIASPTKVLNSRNELARRQATEGCSIGYCTQNGGTTGGAAGDTVTVTDLASLTEAAESETPLTIIVSGNIEGSAKIRVASDKTIYGETGSSITGVGFYIRQVSNVIMRNLKIGQVLADNGDAIGIDESTNVWVDHCDLSGDLSAGKDDLDGLLDITHAAEWVTVSNTYLHDHWKASLVGHSDSNADEDTGHLHITYANNYWYNINSRAPSIRFGTVHIINNYWDSLLGTGVNCRMDAQVLIQSSAFSNCPDEAIFFADSDYTGYAVVDDVDLGGSTNSVPEGTLTASSLPYDAIEALGSAQIAATIPETAGQKL</sequence>
<gene>
    <name type="primary">plyB</name>
    <name type="ORF">AFLA_044970</name>
</gene>
<accession>B8NBC2</accession>
<dbReference type="EC" id="4.2.2.2"/>
<dbReference type="EMBL" id="EQ963476">
    <property type="protein sequence ID" value="EED52795.1"/>
    <property type="molecule type" value="Genomic_DNA"/>
</dbReference>
<dbReference type="RefSeq" id="XP_002377959.1">
    <property type="nucleotide sequence ID" value="XM_002377918.1"/>
</dbReference>
<dbReference type="SMR" id="B8NBC2"/>
<dbReference type="STRING" id="332952.B8NBC2"/>
<dbReference type="EnsemblFungi" id="EED52795">
    <property type="protein sequence ID" value="EED52795"/>
    <property type="gene ID" value="AFLA_044970"/>
</dbReference>
<dbReference type="VEuPathDB" id="FungiDB:AFLA_008075"/>
<dbReference type="eggNOG" id="ENOG502S66G">
    <property type="taxonomic scope" value="Eukaryota"/>
</dbReference>
<dbReference type="HOGENOM" id="CLU_021894_2_1_1"/>
<dbReference type="OMA" id="LVNNYWD"/>
<dbReference type="GO" id="GO:0005576">
    <property type="term" value="C:extracellular region"/>
    <property type="evidence" value="ECO:0007669"/>
    <property type="project" value="UniProtKB-SubCell"/>
</dbReference>
<dbReference type="GO" id="GO:0046872">
    <property type="term" value="F:metal ion binding"/>
    <property type="evidence" value="ECO:0007669"/>
    <property type="project" value="UniProtKB-KW"/>
</dbReference>
<dbReference type="GO" id="GO:0030570">
    <property type="term" value="F:pectate lyase activity"/>
    <property type="evidence" value="ECO:0007669"/>
    <property type="project" value="UniProtKB-EC"/>
</dbReference>
<dbReference type="GO" id="GO:0071555">
    <property type="term" value="P:cell wall organization"/>
    <property type="evidence" value="ECO:0007669"/>
    <property type="project" value="UniProtKB-KW"/>
</dbReference>
<dbReference type="GO" id="GO:0000272">
    <property type="term" value="P:polysaccharide catabolic process"/>
    <property type="evidence" value="ECO:0007669"/>
    <property type="project" value="UniProtKB-KW"/>
</dbReference>
<dbReference type="FunFam" id="2.160.20.10:FF:000036">
    <property type="entry name" value="Pectate lyase A"/>
    <property type="match status" value="1"/>
</dbReference>
<dbReference type="Gene3D" id="2.160.20.10">
    <property type="entry name" value="Single-stranded right-handed beta-helix, Pectin lyase-like"/>
    <property type="match status" value="1"/>
</dbReference>
<dbReference type="InterPro" id="IPR002022">
    <property type="entry name" value="Pec_lyase"/>
</dbReference>
<dbReference type="InterPro" id="IPR012334">
    <property type="entry name" value="Pectin_lyas_fold"/>
</dbReference>
<dbReference type="InterPro" id="IPR011050">
    <property type="entry name" value="Pectin_lyase_fold/virulence"/>
</dbReference>
<dbReference type="InterPro" id="IPR045032">
    <property type="entry name" value="PEL"/>
</dbReference>
<dbReference type="PANTHER" id="PTHR31683">
    <property type="entry name" value="PECTATE LYASE 18-RELATED"/>
    <property type="match status" value="1"/>
</dbReference>
<dbReference type="PANTHER" id="PTHR31683:SF18">
    <property type="entry name" value="PECTATE LYASE 21-RELATED"/>
    <property type="match status" value="1"/>
</dbReference>
<dbReference type="Pfam" id="PF00544">
    <property type="entry name" value="Pectate_lyase_4"/>
    <property type="match status" value="1"/>
</dbReference>
<dbReference type="SMART" id="SM00656">
    <property type="entry name" value="Amb_all"/>
    <property type="match status" value="1"/>
</dbReference>
<dbReference type="SUPFAM" id="SSF51126">
    <property type="entry name" value="Pectin lyase-like"/>
    <property type="match status" value="1"/>
</dbReference>
<protein>
    <recommendedName>
        <fullName>Probable pectate lyase B</fullName>
        <ecNumber>4.2.2.2</ecNumber>
    </recommendedName>
</protein>
<organism>
    <name type="scientific">Aspergillus flavus (strain ATCC 200026 / FGSC A1120 / IAM 13836 / NRRL 3357 / JCM 12722 / SRRC 167)</name>
    <dbReference type="NCBI Taxonomy" id="332952"/>
    <lineage>
        <taxon>Eukaryota</taxon>
        <taxon>Fungi</taxon>
        <taxon>Dikarya</taxon>
        <taxon>Ascomycota</taxon>
        <taxon>Pezizomycotina</taxon>
        <taxon>Eurotiomycetes</taxon>
        <taxon>Eurotiomycetidae</taxon>
        <taxon>Eurotiales</taxon>
        <taxon>Aspergillaceae</taxon>
        <taxon>Aspergillus</taxon>
        <taxon>Aspergillus subgen. Circumdati</taxon>
    </lineage>
</organism>
<keyword id="KW-0106">Calcium</keyword>
<keyword id="KW-0119">Carbohydrate metabolism</keyword>
<keyword id="KW-0961">Cell wall biogenesis/degradation</keyword>
<keyword id="KW-0456">Lyase</keyword>
<keyword id="KW-0479">Metal-binding</keyword>
<keyword id="KW-0624">Polysaccharide degradation</keyword>
<keyword id="KW-0964">Secreted</keyword>
<keyword id="KW-0732">Signal</keyword>
<reference key="1">
    <citation type="journal article" date="2015" name="Genome Announc.">
        <title>Genome sequence of Aspergillus flavus NRRL 3357, a strain that causes aflatoxin contamination of food and feed.</title>
        <authorList>
            <person name="Nierman W.C."/>
            <person name="Yu J."/>
            <person name="Fedorova-Abrams N.D."/>
            <person name="Losada L."/>
            <person name="Cleveland T.E."/>
            <person name="Bhatnagar D."/>
            <person name="Bennett J.W."/>
            <person name="Dean R."/>
            <person name="Payne G.A."/>
        </authorList>
    </citation>
    <scope>NUCLEOTIDE SEQUENCE [LARGE SCALE GENOMIC DNA]</scope>
    <source>
        <strain>ATCC 200026 / FGSC A1120 / IAM 13836 / NRRL 3357 / JCM 12722 / SRRC 167</strain>
    </source>
</reference>
<comment type="function">
    <text evidence="1">Pectinolytic enzyme consist of four classes of enzymes: pectin lyase, polygalacturonase, pectin methylesterase and rhamnogalacturonase. Among pectinolytic enzymes, pectin lyase is the most important in depolymerization of pectin, since it cleaves internal glycosidic bonds of highly methylated pectins. Favors pectate, the anion, over pectin, the methyl ester (By similarity).</text>
</comment>
<comment type="catalytic activity">
    <reaction>
        <text>Eliminative cleavage of (1-&gt;4)-alpha-D-galacturonan to give oligosaccharides with 4-deoxy-alpha-D-galact-4-enuronosyl groups at their non-reducing ends.</text>
        <dbReference type="EC" id="4.2.2.2"/>
    </reaction>
</comment>
<comment type="cofactor">
    <cofactor evidence="1">
        <name>Ca(2+)</name>
        <dbReference type="ChEBI" id="CHEBI:29108"/>
    </cofactor>
    <text evidence="1">Binds 1 Ca(2+) ion per subunit.</text>
</comment>
<comment type="subcellular location">
    <subcellularLocation>
        <location evidence="1">Secreted</location>
    </subcellularLocation>
</comment>
<comment type="similarity">
    <text evidence="3">Belongs to the polysaccharide lyase 1 family.</text>
</comment>
<name>PLYB_ASPFN</name>
<proteinExistence type="inferred from homology"/>